<feature type="chain" id="PRO_0000172783" description="Uronate isomerase">
    <location>
        <begin position="1"/>
        <end position="470"/>
    </location>
</feature>
<accession>Q5PMP8</accession>
<protein>
    <recommendedName>
        <fullName evidence="1">Uronate isomerase</fullName>
        <ecNumber evidence="1">5.3.1.12</ecNumber>
    </recommendedName>
    <alternativeName>
        <fullName evidence="1">Glucuronate isomerase</fullName>
    </alternativeName>
    <alternativeName>
        <fullName evidence="1">Uronic isomerase</fullName>
    </alternativeName>
</protein>
<gene>
    <name evidence="1" type="primary">uxaC</name>
    <name type="ordered locus">SPA3005</name>
</gene>
<reference key="1">
    <citation type="journal article" date="2004" name="Nat. Genet.">
        <title>Comparison of genome degradation in Paratyphi A and Typhi, human-restricted serovars of Salmonella enterica that cause typhoid.</title>
        <authorList>
            <person name="McClelland M."/>
            <person name="Sanderson K.E."/>
            <person name="Clifton S.W."/>
            <person name="Latreille P."/>
            <person name="Porwollik S."/>
            <person name="Sabo A."/>
            <person name="Meyer R."/>
            <person name="Bieri T."/>
            <person name="Ozersky P."/>
            <person name="McLellan M."/>
            <person name="Harkins C.R."/>
            <person name="Wang C."/>
            <person name="Nguyen C."/>
            <person name="Berghoff A."/>
            <person name="Elliott G."/>
            <person name="Kohlberg S."/>
            <person name="Strong C."/>
            <person name="Du F."/>
            <person name="Carter J."/>
            <person name="Kremizki C."/>
            <person name="Layman D."/>
            <person name="Leonard S."/>
            <person name="Sun H."/>
            <person name="Fulton L."/>
            <person name="Nash W."/>
            <person name="Miner T."/>
            <person name="Minx P."/>
            <person name="Delehaunty K."/>
            <person name="Fronick C."/>
            <person name="Magrini V."/>
            <person name="Nhan M."/>
            <person name="Warren W."/>
            <person name="Florea L."/>
            <person name="Spieth J."/>
            <person name="Wilson R.K."/>
        </authorList>
    </citation>
    <scope>NUCLEOTIDE SEQUENCE [LARGE SCALE GENOMIC DNA]</scope>
    <source>
        <strain>ATCC 9150 / SARB42</strain>
    </source>
</reference>
<sequence>MATFMTEDFLLKNDIARTLYHKYAAPMPIYDFHCHLSPQEIADDRRFDNLGQIWLEGDHYKWRALRSAGVDESLITGKETSDYEKYMAWANTVPKTLGNPLYHWTHLELRRPFGITSTLFGPDTAESIWTQCNEKLATPAFSARGIMQQMNVRMVGTTDDPIDSLEYHRQIAADDSINIEVAPSWRPDKVFKIELDGFVDYLGKLEAAADVSITRFDDLRQALTRRLDHFAACGCRASDHGIETLRFAPVPDDAQLDAILGKRLAGETLSELEIAQFTTAVLVWLGRQYAARGWVMQLHIGAIRNNNTRMFRLLGPDTGFDSIGDNNISWALSRLLDSMDVTNELPKTILYCLNPRDNEVLATMIGNFQGPGIAGKVQFGSGWWFNDQKDGMLRQLEQLSQMGLLSQFVGMLTDSRSFLSYTRHEYFRRILCNLLGQWAQDGEIPDDEAMLSRMVQDICFNNAQRYFTIK</sequence>
<dbReference type="EC" id="5.3.1.12" evidence="1"/>
<dbReference type="EMBL" id="CP000026">
    <property type="protein sequence ID" value="AAV78842.1"/>
    <property type="molecule type" value="Genomic_DNA"/>
</dbReference>
<dbReference type="RefSeq" id="WP_000190186.1">
    <property type="nucleotide sequence ID" value="NC_006511.1"/>
</dbReference>
<dbReference type="SMR" id="Q5PMP8"/>
<dbReference type="KEGG" id="spt:SPA3005"/>
<dbReference type="HOGENOM" id="CLU_044465_1_0_6"/>
<dbReference type="UniPathway" id="UPA00246"/>
<dbReference type="Proteomes" id="UP000008185">
    <property type="component" value="Chromosome"/>
</dbReference>
<dbReference type="GO" id="GO:0008880">
    <property type="term" value="F:glucuronate isomerase activity"/>
    <property type="evidence" value="ECO:0007669"/>
    <property type="project" value="UniProtKB-UniRule"/>
</dbReference>
<dbReference type="GO" id="GO:0019698">
    <property type="term" value="P:D-galacturonate catabolic process"/>
    <property type="evidence" value="ECO:0007669"/>
    <property type="project" value="TreeGrafter"/>
</dbReference>
<dbReference type="GO" id="GO:0042840">
    <property type="term" value="P:D-glucuronate catabolic process"/>
    <property type="evidence" value="ECO:0007669"/>
    <property type="project" value="TreeGrafter"/>
</dbReference>
<dbReference type="Gene3D" id="3.20.20.140">
    <property type="entry name" value="Metal-dependent hydrolases"/>
    <property type="match status" value="1"/>
</dbReference>
<dbReference type="Gene3D" id="1.10.2020.10">
    <property type="entry name" value="uronate isomerase, domain 2, chain A"/>
    <property type="match status" value="1"/>
</dbReference>
<dbReference type="HAMAP" id="MF_00675">
    <property type="entry name" value="UxaC"/>
    <property type="match status" value="1"/>
</dbReference>
<dbReference type="InterPro" id="IPR032466">
    <property type="entry name" value="Metal_Hydrolase"/>
</dbReference>
<dbReference type="InterPro" id="IPR003766">
    <property type="entry name" value="Uronate_isomerase"/>
</dbReference>
<dbReference type="NCBIfam" id="NF002794">
    <property type="entry name" value="PRK02925.1"/>
    <property type="match status" value="1"/>
</dbReference>
<dbReference type="PANTHER" id="PTHR30068">
    <property type="entry name" value="URONATE ISOMERASE"/>
    <property type="match status" value="1"/>
</dbReference>
<dbReference type="PANTHER" id="PTHR30068:SF4">
    <property type="entry name" value="URONATE ISOMERASE"/>
    <property type="match status" value="1"/>
</dbReference>
<dbReference type="Pfam" id="PF02614">
    <property type="entry name" value="UxaC"/>
    <property type="match status" value="1"/>
</dbReference>
<dbReference type="SUPFAM" id="SSF51556">
    <property type="entry name" value="Metallo-dependent hydrolases"/>
    <property type="match status" value="1"/>
</dbReference>
<proteinExistence type="inferred from homology"/>
<organism>
    <name type="scientific">Salmonella paratyphi A (strain ATCC 9150 / SARB42)</name>
    <dbReference type="NCBI Taxonomy" id="295319"/>
    <lineage>
        <taxon>Bacteria</taxon>
        <taxon>Pseudomonadati</taxon>
        <taxon>Pseudomonadota</taxon>
        <taxon>Gammaproteobacteria</taxon>
        <taxon>Enterobacterales</taxon>
        <taxon>Enterobacteriaceae</taxon>
        <taxon>Salmonella</taxon>
    </lineage>
</organism>
<comment type="catalytic activity">
    <reaction evidence="1">
        <text>D-glucuronate = D-fructuronate</text>
        <dbReference type="Rhea" id="RHEA:13049"/>
        <dbReference type="ChEBI" id="CHEBI:58720"/>
        <dbReference type="ChEBI" id="CHEBI:59863"/>
        <dbReference type="EC" id="5.3.1.12"/>
    </reaction>
</comment>
<comment type="catalytic activity">
    <reaction evidence="1">
        <text>aldehydo-D-galacturonate = keto-D-tagaturonate</text>
        <dbReference type="Rhea" id="RHEA:27702"/>
        <dbReference type="ChEBI" id="CHEBI:12952"/>
        <dbReference type="ChEBI" id="CHEBI:17886"/>
        <dbReference type="EC" id="5.3.1.12"/>
    </reaction>
</comment>
<comment type="pathway">
    <text evidence="1">Carbohydrate metabolism; pentose and glucuronate interconversion.</text>
</comment>
<comment type="similarity">
    <text evidence="1">Belongs to the metallo-dependent hydrolases superfamily. Uronate isomerase family.</text>
</comment>
<name>UXAC_SALPA</name>
<evidence type="ECO:0000255" key="1">
    <source>
        <dbReference type="HAMAP-Rule" id="MF_00675"/>
    </source>
</evidence>
<keyword id="KW-0413">Isomerase</keyword>